<evidence type="ECO:0000255" key="1">
    <source>
        <dbReference type="HAMAP-Rule" id="MF_00098"/>
    </source>
</evidence>
<reference key="1">
    <citation type="journal article" date="2005" name="Infect. Immun.">
        <title>Comparative genomic analysis of Chlamydia trachomatis oculotropic and genitotropic strains.</title>
        <authorList>
            <person name="Carlson J.H."/>
            <person name="Porcella S.F."/>
            <person name="McClarty G."/>
            <person name="Caldwell H.D."/>
        </authorList>
    </citation>
    <scope>NUCLEOTIDE SEQUENCE [LARGE SCALE GENOMIC DNA]</scope>
    <source>
        <strain>ATCC VR-571B / DSM 19440 / HAR-13</strain>
    </source>
</reference>
<sequence>MESSRILITSALPYANGPLHFGHITGAYLPADVYARFQRLQGKEVLYICGSDEYGIAITLNAELAGMGYQEYVDMYHKLHKDTFKKLGISVDFFSRTTNTYHPAIVQDFYRNLQERGLVENQVTEQLYSEEEGKFLADRYVVGTCPKCGFDRARGDECQQCGADYEARDLKEPRSKLTGAALSLRDTEHAYLHLERMKEDLLAFVQGIYLRPHIRNFVTDYIEHLRPRAVTRDLSWGIPVPDLENKVFYVWFDAPIGYISGTMDWAASIGDPEAWKKFWLDDTVTYAQFIGKDNTSFHAVIFPAMEIGQSLPYKKVDALVTSEFLLLEGFQFSKSDGNFIDMDAFLETYSLDKLRYVLAAIAPETSDSEFSFQEFKTRCNSELVGKYGNFVNRVLAFAVKNGCTELSSPQLEQKDLDFISKSQKLAKDAAEHYAQYSLRKACSTIMELAALGNGYFNDEAPWKLAKEGNWNRVRAILFCACYCQKLLALISYPIMPETALKILEMIAPHSLDLGSQDPDRLQSLWTDSFFDYSEEKFSLKEPELLFTMVE</sequence>
<keyword id="KW-0030">Aminoacyl-tRNA synthetase</keyword>
<keyword id="KW-0067">ATP-binding</keyword>
<keyword id="KW-0963">Cytoplasm</keyword>
<keyword id="KW-0436">Ligase</keyword>
<keyword id="KW-0479">Metal-binding</keyword>
<keyword id="KW-0547">Nucleotide-binding</keyword>
<keyword id="KW-0648">Protein biosynthesis</keyword>
<keyword id="KW-0862">Zinc</keyword>
<protein>
    <recommendedName>
        <fullName evidence="1">Methionine--tRNA ligase</fullName>
        <ecNumber evidence="1">6.1.1.10</ecNumber>
    </recommendedName>
    <alternativeName>
        <fullName evidence="1">Methionyl-tRNA synthetase</fullName>
        <shortName evidence="1">MetRS</shortName>
    </alternativeName>
</protein>
<feature type="chain" id="PRO_0000331800" description="Methionine--tRNA ligase">
    <location>
        <begin position="1"/>
        <end position="550"/>
    </location>
</feature>
<feature type="short sequence motif" description="'HIGH' region">
    <location>
        <begin position="13"/>
        <end position="23"/>
    </location>
</feature>
<feature type="short sequence motif" description="'KMSKS' region">
    <location>
        <begin position="331"/>
        <end position="335"/>
    </location>
</feature>
<feature type="binding site" evidence="1">
    <location>
        <position position="145"/>
    </location>
    <ligand>
        <name>Zn(2+)</name>
        <dbReference type="ChEBI" id="CHEBI:29105"/>
    </ligand>
</feature>
<feature type="binding site" evidence="1">
    <location>
        <position position="148"/>
    </location>
    <ligand>
        <name>Zn(2+)</name>
        <dbReference type="ChEBI" id="CHEBI:29105"/>
    </ligand>
</feature>
<feature type="binding site" evidence="1">
    <location>
        <position position="158"/>
    </location>
    <ligand>
        <name>Zn(2+)</name>
        <dbReference type="ChEBI" id="CHEBI:29105"/>
    </ligand>
</feature>
<feature type="binding site" evidence="1">
    <location>
        <position position="161"/>
    </location>
    <ligand>
        <name>Zn(2+)</name>
        <dbReference type="ChEBI" id="CHEBI:29105"/>
    </ligand>
</feature>
<feature type="binding site" evidence="1">
    <location>
        <position position="334"/>
    </location>
    <ligand>
        <name>ATP</name>
        <dbReference type="ChEBI" id="CHEBI:30616"/>
    </ligand>
</feature>
<name>SYM_CHLTA</name>
<comment type="function">
    <text evidence="1">Is required not only for elongation of protein synthesis but also for the initiation of all mRNA translation through initiator tRNA(fMet) aminoacylation.</text>
</comment>
<comment type="catalytic activity">
    <reaction evidence="1">
        <text>tRNA(Met) + L-methionine + ATP = L-methionyl-tRNA(Met) + AMP + diphosphate</text>
        <dbReference type="Rhea" id="RHEA:13481"/>
        <dbReference type="Rhea" id="RHEA-COMP:9667"/>
        <dbReference type="Rhea" id="RHEA-COMP:9698"/>
        <dbReference type="ChEBI" id="CHEBI:30616"/>
        <dbReference type="ChEBI" id="CHEBI:33019"/>
        <dbReference type="ChEBI" id="CHEBI:57844"/>
        <dbReference type="ChEBI" id="CHEBI:78442"/>
        <dbReference type="ChEBI" id="CHEBI:78530"/>
        <dbReference type="ChEBI" id="CHEBI:456215"/>
        <dbReference type="EC" id="6.1.1.10"/>
    </reaction>
</comment>
<comment type="cofactor">
    <cofactor evidence="1">
        <name>Zn(2+)</name>
        <dbReference type="ChEBI" id="CHEBI:29105"/>
    </cofactor>
    <text evidence="1">Binds 1 zinc ion per subunit.</text>
</comment>
<comment type="subunit">
    <text evidence="1">Monomer.</text>
</comment>
<comment type="subcellular location">
    <subcellularLocation>
        <location evidence="1">Cytoplasm</location>
    </subcellularLocation>
</comment>
<comment type="similarity">
    <text evidence="1">Belongs to the class-I aminoacyl-tRNA synthetase family. MetG type 1 subfamily.</text>
</comment>
<accession>Q3KMZ0</accession>
<dbReference type="EC" id="6.1.1.10" evidence="1"/>
<dbReference type="EMBL" id="CP000051">
    <property type="protein sequence ID" value="AAX50282.1"/>
    <property type="molecule type" value="Genomic_DNA"/>
</dbReference>
<dbReference type="RefSeq" id="WP_011324529.1">
    <property type="nucleotide sequence ID" value="NC_007429.1"/>
</dbReference>
<dbReference type="SMR" id="Q3KMZ0"/>
<dbReference type="KEGG" id="cta:CTA_0034"/>
<dbReference type="HOGENOM" id="CLU_009710_1_2_0"/>
<dbReference type="Proteomes" id="UP000002532">
    <property type="component" value="Chromosome"/>
</dbReference>
<dbReference type="GO" id="GO:0005829">
    <property type="term" value="C:cytosol"/>
    <property type="evidence" value="ECO:0007669"/>
    <property type="project" value="TreeGrafter"/>
</dbReference>
<dbReference type="GO" id="GO:0005524">
    <property type="term" value="F:ATP binding"/>
    <property type="evidence" value="ECO:0007669"/>
    <property type="project" value="UniProtKB-UniRule"/>
</dbReference>
<dbReference type="GO" id="GO:0046872">
    <property type="term" value="F:metal ion binding"/>
    <property type="evidence" value="ECO:0007669"/>
    <property type="project" value="UniProtKB-KW"/>
</dbReference>
<dbReference type="GO" id="GO:0004825">
    <property type="term" value="F:methionine-tRNA ligase activity"/>
    <property type="evidence" value="ECO:0007669"/>
    <property type="project" value="UniProtKB-UniRule"/>
</dbReference>
<dbReference type="GO" id="GO:0006431">
    <property type="term" value="P:methionyl-tRNA aminoacylation"/>
    <property type="evidence" value="ECO:0007669"/>
    <property type="project" value="UniProtKB-UniRule"/>
</dbReference>
<dbReference type="CDD" id="cd07957">
    <property type="entry name" value="Anticodon_Ia_Met"/>
    <property type="match status" value="1"/>
</dbReference>
<dbReference type="CDD" id="cd00814">
    <property type="entry name" value="MetRS_core"/>
    <property type="match status" value="1"/>
</dbReference>
<dbReference type="FunFam" id="2.20.28.20:FF:000001">
    <property type="entry name" value="Methionine--tRNA ligase"/>
    <property type="match status" value="1"/>
</dbReference>
<dbReference type="Gene3D" id="3.40.50.620">
    <property type="entry name" value="HUPs"/>
    <property type="match status" value="1"/>
</dbReference>
<dbReference type="Gene3D" id="1.10.730.10">
    <property type="entry name" value="Isoleucyl-tRNA Synthetase, Domain 1"/>
    <property type="match status" value="1"/>
</dbReference>
<dbReference type="Gene3D" id="2.20.28.20">
    <property type="entry name" value="Methionyl-tRNA synthetase, Zn-domain"/>
    <property type="match status" value="1"/>
</dbReference>
<dbReference type="HAMAP" id="MF_00098">
    <property type="entry name" value="Met_tRNA_synth_type1"/>
    <property type="match status" value="1"/>
</dbReference>
<dbReference type="InterPro" id="IPR041872">
    <property type="entry name" value="Anticodon_Met"/>
</dbReference>
<dbReference type="InterPro" id="IPR023458">
    <property type="entry name" value="Met-tRNA_ligase_1"/>
</dbReference>
<dbReference type="InterPro" id="IPR014758">
    <property type="entry name" value="Met-tRNA_synth"/>
</dbReference>
<dbReference type="InterPro" id="IPR015413">
    <property type="entry name" value="Methionyl/Leucyl_tRNA_Synth"/>
</dbReference>
<dbReference type="InterPro" id="IPR033911">
    <property type="entry name" value="MetRS_core"/>
</dbReference>
<dbReference type="InterPro" id="IPR029038">
    <property type="entry name" value="MetRS_Zn"/>
</dbReference>
<dbReference type="InterPro" id="IPR014729">
    <property type="entry name" value="Rossmann-like_a/b/a_fold"/>
</dbReference>
<dbReference type="InterPro" id="IPR009080">
    <property type="entry name" value="tRNAsynth_Ia_anticodon-bd"/>
</dbReference>
<dbReference type="NCBIfam" id="TIGR00398">
    <property type="entry name" value="metG"/>
    <property type="match status" value="1"/>
</dbReference>
<dbReference type="PANTHER" id="PTHR45765">
    <property type="entry name" value="METHIONINE--TRNA LIGASE"/>
    <property type="match status" value="1"/>
</dbReference>
<dbReference type="PANTHER" id="PTHR45765:SF1">
    <property type="entry name" value="METHIONINE--TRNA LIGASE, CYTOPLASMIC"/>
    <property type="match status" value="1"/>
</dbReference>
<dbReference type="Pfam" id="PF19303">
    <property type="entry name" value="Anticodon_3"/>
    <property type="match status" value="1"/>
</dbReference>
<dbReference type="Pfam" id="PF09334">
    <property type="entry name" value="tRNA-synt_1g"/>
    <property type="match status" value="1"/>
</dbReference>
<dbReference type="PRINTS" id="PR01041">
    <property type="entry name" value="TRNASYNTHMET"/>
</dbReference>
<dbReference type="SUPFAM" id="SSF47323">
    <property type="entry name" value="Anticodon-binding domain of a subclass of class I aminoacyl-tRNA synthetases"/>
    <property type="match status" value="1"/>
</dbReference>
<dbReference type="SUPFAM" id="SSF57770">
    <property type="entry name" value="Methionyl-tRNA synthetase (MetRS), Zn-domain"/>
    <property type="match status" value="1"/>
</dbReference>
<dbReference type="SUPFAM" id="SSF52374">
    <property type="entry name" value="Nucleotidylyl transferase"/>
    <property type="match status" value="1"/>
</dbReference>
<proteinExistence type="inferred from homology"/>
<gene>
    <name evidence="1" type="primary">metG</name>
    <name type="ordered locus">CTA_0034</name>
</gene>
<organism>
    <name type="scientific">Chlamydia trachomatis serovar A (strain ATCC VR-571B / DSM 19440 / HAR-13)</name>
    <dbReference type="NCBI Taxonomy" id="315277"/>
    <lineage>
        <taxon>Bacteria</taxon>
        <taxon>Pseudomonadati</taxon>
        <taxon>Chlamydiota</taxon>
        <taxon>Chlamydiia</taxon>
        <taxon>Chlamydiales</taxon>
        <taxon>Chlamydiaceae</taxon>
        <taxon>Chlamydia/Chlamydophila group</taxon>
        <taxon>Chlamydia</taxon>
    </lineage>
</organism>